<proteinExistence type="inferred from homology"/>
<organism>
    <name type="scientific">Haemophilus influenzae (strain 86-028NP)</name>
    <dbReference type="NCBI Taxonomy" id="281310"/>
    <lineage>
        <taxon>Bacteria</taxon>
        <taxon>Pseudomonadati</taxon>
        <taxon>Pseudomonadota</taxon>
        <taxon>Gammaproteobacteria</taxon>
        <taxon>Pasteurellales</taxon>
        <taxon>Pasteurellaceae</taxon>
        <taxon>Haemophilus</taxon>
    </lineage>
</organism>
<protein>
    <recommendedName>
        <fullName evidence="1">Beta-ketoacyl-[acyl-carrier-protein] synthase III</fullName>
        <shortName evidence="1">Beta-ketoacyl-ACP synthase III</shortName>
        <shortName evidence="1">KAS III</shortName>
        <ecNumber evidence="1">2.3.1.180</ecNumber>
    </recommendedName>
    <alternativeName>
        <fullName evidence="1">3-oxoacyl-[acyl-carrier-protein] synthase 3</fullName>
    </alternativeName>
    <alternativeName>
        <fullName evidence="1">3-oxoacyl-[acyl-carrier-protein] synthase III</fullName>
    </alternativeName>
</protein>
<evidence type="ECO:0000255" key="1">
    <source>
        <dbReference type="HAMAP-Rule" id="MF_01815"/>
    </source>
</evidence>
<reference key="1">
    <citation type="journal article" date="2005" name="J. Bacteriol.">
        <title>Genomic sequence of an otitis media isolate of nontypeable Haemophilus influenzae: comparative study with H. influenzae serotype d, strain KW20.</title>
        <authorList>
            <person name="Harrison A."/>
            <person name="Dyer D.W."/>
            <person name="Gillaspy A."/>
            <person name="Ray W.C."/>
            <person name="Mungur R."/>
            <person name="Carson M.B."/>
            <person name="Zhong H."/>
            <person name="Gipson J."/>
            <person name="Gipson M."/>
            <person name="Johnson L.S."/>
            <person name="Lewis L."/>
            <person name="Bakaletz L.O."/>
            <person name="Munson R.S. Jr."/>
        </authorList>
    </citation>
    <scope>NUCLEOTIDE SEQUENCE [LARGE SCALE GENOMIC DNA]</scope>
    <source>
        <strain>86-028NP</strain>
    </source>
</reference>
<gene>
    <name evidence="1" type="primary">fabH</name>
    <name type="ordered locus">NTHI0247</name>
</gene>
<accession>Q4QP30</accession>
<feature type="chain" id="PRO_1000056363" description="Beta-ketoacyl-[acyl-carrier-protein] synthase III">
    <location>
        <begin position="1"/>
        <end position="316"/>
    </location>
</feature>
<feature type="region of interest" description="ACP-binding" evidence="1">
    <location>
        <begin position="244"/>
        <end position="248"/>
    </location>
</feature>
<feature type="active site" evidence="1">
    <location>
        <position position="112"/>
    </location>
</feature>
<feature type="active site" evidence="1">
    <location>
        <position position="243"/>
    </location>
</feature>
<feature type="active site" evidence="1">
    <location>
        <position position="273"/>
    </location>
</feature>
<name>FABH_HAEI8</name>
<dbReference type="EC" id="2.3.1.180" evidence="1"/>
<dbReference type="EMBL" id="CP000057">
    <property type="protein sequence ID" value="AAX87217.1"/>
    <property type="molecule type" value="Genomic_DNA"/>
</dbReference>
<dbReference type="RefSeq" id="WP_005691510.1">
    <property type="nucleotide sequence ID" value="NC_007146.2"/>
</dbReference>
<dbReference type="SMR" id="Q4QP30"/>
<dbReference type="KEGG" id="hit:NTHI0247"/>
<dbReference type="HOGENOM" id="CLU_039592_3_1_6"/>
<dbReference type="UniPathway" id="UPA00094"/>
<dbReference type="Proteomes" id="UP000002525">
    <property type="component" value="Chromosome"/>
</dbReference>
<dbReference type="GO" id="GO:0005737">
    <property type="term" value="C:cytoplasm"/>
    <property type="evidence" value="ECO:0007669"/>
    <property type="project" value="UniProtKB-SubCell"/>
</dbReference>
<dbReference type="GO" id="GO:0004315">
    <property type="term" value="F:3-oxoacyl-[acyl-carrier-protein] synthase activity"/>
    <property type="evidence" value="ECO:0007669"/>
    <property type="project" value="InterPro"/>
</dbReference>
<dbReference type="GO" id="GO:0033818">
    <property type="term" value="F:beta-ketoacyl-acyl-carrier-protein synthase III activity"/>
    <property type="evidence" value="ECO:0007669"/>
    <property type="project" value="UniProtKB-UniRule"/>
</dbReference>
<dbReference type="GO" id="GO:0006633">
    <property type="term" value="P:fatty acid biosynthetic process"/>
    <property type="evidence" value="ECO:0007669"/>
    <property type="project" value="UniProtKB-UniRule"/>
</dbReference>
<dbReference type="GO" id="GO:0044550">
    <property type="term" value="P:secondary metabolite biosynthetic process"/>
    <property type="evidence" value="ECO:0007669"/>
    <property type="project" value="TreeGrafter"/>
</dbReference>
<dbReference type="CDD" id="cd00830">
    <property type="entry name" value="KAS_III"/>
    <property type="match status" value="1"/>
</dbReference>
<dbReference type="FunFam" id="3.40.47.10:FF:000056">
    <property type="entry name" value="3-oxoacyl-[acyl-carrier-protein] synthase 3"/>
    <property type="match status" value="1"/>
</dbReference>
<dbReference type="FunFam" id="3.40.47.10:FF:000068">
    <property type="entry name" value="3-oxoacyl-[acyl-carrier-protein] synthase 3"/>
    <property type="match status" value="1"/>
</dbReference>
<dbReference type="Gene3D" id="3.40.47.10">
    <property type="match status" value="2"/>
</dbReference>
<dbReference type="HAMAP" id="MF_01815">
    <property type="entry name" value="FabH"/>
    <property type="match status" value="1"/>
</dbReference>
<dbReference type="InterPro" id="IPR013747">
    <property type="entry name" value="ACP_syn_III_C"/>
</dbReference>
<dbReference type="InterPro" id="IPR013751">
    <property type="entry name" value="ACP_syn_III_N"/>
</dbReference>
<dbReference type="InterPro" id="IPR004655">
    <property type="entry name" value="FabH"/>
</dbReference>
<dbReference type="InterPro" id="IPR016039">
    <property type="entry name" value="Thiolase-like"/>
</dbReference>
<dbReference type="NCBIfam" id="TIGR00747">
    <property type="entry name" value="fabH"/>
    <property type="match status" value="1"/>
</dbReference>
<dbReference type="NCBIfam" id="NF006829">
    <property type="entry name" value="PRK09352.1"/>
    <property type="match status" value="1"/>
</dbReference>
<dbReference type="PANTHER" id="PTHR34069">
    <property type="entry name" value="3-OXOACYL-[ACYL-CARRIER-PROTEIN] SYNTHASE 3"/>
    <property type="match status" value="1"/>
</dbReference>
<dbReference type="PANTHER" id="PTHR34069:SF2">
    <property type="entry name" value="BETA-KETOACYL-[ACYL-CARRIER-PROTEIN] SYNTHASE III"/>
    <property type="match status" value="1"/>
</dbReference>
<dbReference type="Pfam" id="PF08545">
    <property type="entry name" value="ACP_syn_III"/>
    <property type="match status" value="1"/>
</dbReference>
<dbReference type="Pfam" id="PF08541">
    <property type="entry name" value="ACP_syn_III_C"/>
    <property type="match status" value="1"/>
</dbReference>
<dbReference type="SUPFAM" id="SSF53901">
    <property type="entry name" value="Thiolase-like"/>
    <property type="match status" value="1"/>
</dbReference>
<comment type="function">
    <text evidence="1">Catalyzes the condensation reaction of fatty acid synthesis by the addition to an acyl acceptor of two carbons from malonyl-ACP. Catalyzes the first condensation reaction which initiates fatty acid synthesis and may therefore play a role in governing the total rate of fatty acid production. Possesses both acetoacetyl-ACP synthase and acetyl transacylase activities. Its substrate specificity determines the biosynthesis of branched-chain and/or straight-chain of fatty acids.</text>
</comment>
<comment type="catalytic activity">
    <reaction evidence="1">
        <text>malonyl-[ACP] + acetyl-CoA + H(+) = 3-oxobutanoyl-[ACP] + CO2 + CoA</text>
        <dbReference type="Rhea" id="RHEA:12080"/>
        <dbReference type="Rhea" id="RHEA-COMP:9623"/>
        <dbReference type="Rhea" id="RHEA-COMP:9625"/>
        <dbReference type="ChEBI" id="CHEBI:15378"/>
        <dbReference type="ChEBI" id="CHEBI:16526"/>
        <dbReference type="ChEBI" id="CHEBI:57287"/>
        <dbReference type="ChEBI" id="CHEBI:57288"/>
        <dbReference type="ChEBI" id="CHEBI:78449"/>
        <dbReference type="ChEBI" id="CHEBI:78450"/>
        <dbReference type="EC" id="2.3.1.180"/>
    </reaction>
</comment>
<comment type="pathway">
    <text evidence="1">Lipid metabolism; fatty acid biosynthesis.</text>
</comment>
<comment type="subunit">
    <text evidence="1">Homodimer.</text>
</comment>
<comment type="subcellular location">
    <subcellularLocation>
        <location evidence="1">Cytoplasm</location>
    </subcellularLocation>
</comment>
<comment type="domain">
    <text evidence="1">The last Arg residue of the ACP-binding site is essential for the weak association between ACP/AcpP and FabH.</text>
</comment>
<comment type="similarity">
    <text evidence="1">Belongs to the thiolase-like superfamily. FabH family.</text>
</comment>
<keyword id="KW-0012">Acyltransferase</keyword>
<keyword id="KW-0963">Cytoplasm</keyword>
<keyword id="KW-0275">Fatty acid biosynthesis</keyword>
<keyword id="KW-0276">Fatty acid metabolism</keyword>
<keyword id="KW-0444">Lipid biosynthesis</keyword>
<keyword id="KW-0443">Lipid metabolism</keyword>
<keyword id="KW-0511">Multifunctional enzyme</keyword>
<keyword id="KW-0808">Transferase</keyword>
<sequence>MNSRILSTGSYLPSHIRTNADLEKMVDTSDEWIVTRSGIRERRIAAEDETVATMGFEAAKNAIEAAQINPQDIELIIVATTSHSHAYPSAACQVQGLLNIDDAISFDLAAACTGFVYALSVADQFIRAGKVKKALVIGSDLNSRKLDETDRSTVVLFGDGAGAVILEASEQEGIISTHLHASADKNNALVLAQPERGIEKSGYIEMQGNETFKLAVRELSNVVEETLLANNLDKKDLDWLVPHQANLRIITATAKKLEMDMSQVVVTLDKYANNSAATVPVALDEAIRDGRIQRGQLLLLEAFGGGWTWGSALVRF</sequence>